<gene>
    <name type="primary">Prmt9</name>
    <name type="synonym">Prmt10</name>
</gene>
<proteinExistence type="evidence at transcript level"/>
<evidence type="ECO:0000250" key="1">
    <source>
        <dbReference type="UniProtKB" id="Q6P2P2"/>
    </source>
</evidence>
<evidence type="ECO:0000255" key="2">
    <source>
        <dbReference type="PROSITE-ProRule" id="PRU01015"/>
    </source>
</evidence>
<evidence type="ECO:0000303" key="3">
    <source>
    </source>
</evidence>
<evidence type="ECO:0000305" key="4"/>
<name>ANM9_MOUSE</name>
<dbReference type="EC" id="2.1.1.320" evidence="1"/>
<dbReference type="EMBL" id="AK045296">
    <property type="protein sequence ID" value="BAC32300.1"/>
    <property type="molecule type" value="mRNA"/>
</dbReference>
<dbReference type="EMBL" id="AK045315">
    <property type="protein sequence ID" value="BAC32307.1"/>
    <property type="status" value="ALT_FRAME"/>
    <property type="molecule type" value="mRNA"/>
</dbReference>
<dbReference type="EMBL" id="AK154546">
    <property type="protein sequence ID" value="BAE32670.1"/>
    <property type="molecule type" value="mRNA"/>
</dbReference>
<dbReference type="EMBL" id="AC109139">
    <property type="status" value="NOT_ANNOTATED_CDS"/>
    <property type="molecule type" value="Genomic_DNA"/>
</dbReference>
<dbReference type="EMBL" id="AC113049">
    <property type="status" value="NOT_ANNOTATED_CDS"/>
    <property type="molecule type" value="Genomic_DNA"/>
</dbReference>
<dbReference type="CCDS" id="CCDS40394.1">
    <molecule id="Q3U3W5-1"/>
</dbReference>
<dbReference type="RefSeq" id="NP_001074709.1">
    <property type="nucleotide sequence ID" value="NM_001081240.3"/>
</dbReference>
<dbReference type="SMR" id="Q3U3W5"/>
<dbReference type="FunCoup" id="Q3U3W5">
    <property type="interactions" value="2729"/>
</dbReference>
<dbReference type="IntAct" id="Q3U3W5">
    <property type="interactions" value="1"/>
</dbReference>
<dbReference type="MINT" id="Q3U3W5"/>
<dbReference type="STRING" id="10090.ENSMUSP00000050181"/>
<dbReference type="iPTMnet" id="Q3U3W5"/>
<dbReference type="PhosphoSitePlus" id="Q3U3W5"/>
<dbReference type="PaxDb" id="10090-ENSMUSP00000050181"/>
<dbReference type="PeptideAtlas" id="Q3U3W5"/>
<dbReference type="ProteomicsDB" id="281991">
    <molecule id="Q3U3W5-1"/>
</dbReference>
<dbReference type="ProteomicsDB" id="281992">
    <molecule id="Q3U3W5-2"/>
</dbReference>
<dbReference type="Pumba" id="Q3U3W5"/>
<dbReference type="Antibodypedia" id="49190">
    <property type="antibodies" value="129 antibodies from 19 providers"/>
</dbReference>
<dbReference type="DNASU" id="102182"/>
<dbReference type="Ensembl" id="ENSMUST00000118622.2">
    <molecule id="Q3U3W5-1"/>
    <property type="protein sequence ID" value="ENSMUSP00000112692.2"/>
    <property type="gene ID" value="ENSMUSG00000037134.18"/>
</dbReference>
<dbReference type="GeneID" id="102182"/>
<dbReference type="KEGG" id="mmu:102182"/>
<dbReference type="UCSC" id="uc009mhp.1">
    <molecule id="Q3U3W5-2"/>
    <property type="organism name" value="mouse"/>
</dbReference>
<dbReference type="UCSC" id="uc012ggg.1">
    <molecule id="Q3U3W5-1"/>
    <property type="organism name" value="mouse"/>
</dbReference>
<dbReference type="AGR" id="MGI:2142651"/>
<dbReference type="CTD" id="90826"/>
<dbReference type="MGI" id="MGI:2142651">
    <property type="gene designation" value="Prmt9"/>
</dbReference>
<dbReference type="VEuPathDB" id="HostDB:ENSMUSG00000037134"/>
<dbReference type="eggNOG" id="KOG1501">
    <property type="taxonomic scope" value="Eukaryota"/>
</dbReference>
<dbReference type="GeneTree" id="ENSGT00940000158472"/>
<dbReference type="InParanoid" id="Q3U3W5"/>
<dbReference type="OrthoDB" id="5980806at2759"/>
<dbReference type="PhylomeDB" id="Q3U3W5"/>
<dbReference type="BioGRID-ORCS" id="102182">
    <property type="hits" value="7 hits in 79 CRISPR screens"/>
</dbReference>
<dbReference type="ChiTaRS" id="Prmt9">
    <property type="organism name" value="mouse"/>
</dbReference>
<dbReference type="PRO" id="PR:Q3U3W5"/>
<dbReference type="Proteomes" id="UP000000589">
    <property type="component" value="Chromosome 8"/>
</dbReference>
<dbReference type="RNAct" id="Q3U3W5">
    <property type="molecule type" value="protein"/>
</dbReference>
<dbReference type="Bgee" id="ENSMUSG00000037134">
    <property type="expression patterns" value="Expressed in superior cervical ganglion and 225 other cell types or tissues"/>
</dbReference>
<dbReference type="ExpressionAtlas" id="Q3U3W5">
    <property type="expression patterns" value="baseline and differential"/>
</dbReference>
<dbReference type="GO" id="GO:0005737">
    <property type="term" value="C:cytoplasm"/>
    <property type="evidence" value="ECO:0000250"/>
    <property type="project" value="UniProtKB"/>
</dbReference>
<dbReference type="GO" id="GO:0016274">
    <property type="term" value="F:protein-arginine N-methyltransferase activity"/>
    <property type="evidence" value="ECO:0000250"/>
    <property type="project" value="UniProtKB"/>
</dbReference>
<dbReference type="GO" id="GO:0035243">
    <property type="term" value="F:protein-arginine omega-N symmetric methyltransferase activity"/>
    <property type="evidence" value="ECO:0000250"/>
    <property type="project" value="UniProtKB"/>
</dbReference>
<dbReference type="GO" id="GO:0032259">
    <property type="term" value="P:methylation"/>
    <property type="evidence" value="ECO:0007669"/>
    <property type="project" value="UniProtKB-KW"/>
</dbReference>
<dbReference type="GO" id="GO:0006397">
    <property type="term" value="P:mRNA processing"/>
    <property type="evidence" value="ECO:0000250"/>
    <property type="project" value="UniProtKB"/>
</dbReference>
<dbReference type="CDD" id="cd02440">
    <property type="entry name" value="AdoMet_MTases"/>
    <property type="match status" value="1"/>
</dbReference>
<dbReference type="FunFam" id="1.25.40.10:FF:000138">
    <property type="entry name" value="Protein arginine methyltransferase 9"/>
    <property type="match status" value="1"/>
</dbReference>
<dbReference type="FunFam" id="2.70.160.11:FF:000006">
    <property type="entry name" value="Protein arginine methyltransferase 9"/>
    <property type="match status" value="1"/>
</dbReference>
<dbReference type="FunFam" id="3.40.50.150:FF:000078">
    <property type="entry name" value="Protein arginine methyltransferase 9"/>
    <property type="match status" value="1"/>
</dbReference>
<dbReference type="FunFam" id="3.40.50.150:FF:000384">
    <property type="entry name" value="Protein arginine methyltransferase 9"/>
    <property type="match status" value="1"/>
</dbReference>
<dbReference type="FunFam" id="2.70.160.11:FF:000011">
    <property type="entry name" value="Protein arginine N-methyltransferase 9"/>
    <property type="match status" value="1"/>
</dbReference>
<dbReference type="Gene3D" id="2.70.160.11">
    <property type="entry name" value="Hnrnp arginine n-methyltransferase1"/>
    <property type="match status" value="2"/>
</dbReference>
<dbReference type="Gene3D" id="1.25.40.10">
    <property type="entry name" value="Tetratricopeptide repeat domain"/>
    <property type="match status" value="1"/>
</dbReference>
<dbReference type="Gene3D" id="3.40.50.150">
    <property type="entry name" value="Vaccinia Virus protein VP39"/>
    <property type="match status" value="1"/>
</dbReference>
<dbReference type="InterPro" id="IPR025799">
    <property type="entry name" value="Arg_MeTrfase"/>
</dbReference>
<dbReference type="InterPro" id="IPR055135">
    <property type="entry name" value="PRMT_dom"/>
</dbReference>
<dbReference type="InterPro" id="IPR029063">
    <property type="entry name" value="SAM-dependent_MTases_sf"/>
</dbReference>
<dbReference type="InterPro" id="IPR011990">
    <property type="entry name" value="TPR-like_helical_dom_sf"/>
</dbReference>
<dbReference type="InterPro" id="IPR019734">
    <property type="entry name" value="TPR_rpt"/>
</dbReference>
<dbReference type="PANTHER" id="PTHR11006">
    <property type="entry name" value="PROTEIN ARGININE N-METHYLTRANSFERASE"/>
    <property type="match status" value="1"/>
</dbReference>
<dbReference type="PANTHER" id="PTHR11006:SF60">
    <property type="entry name" value="PROTEIN ARGININE N-METHYLTRANSFERASE 9"/>
    <property type="match status" value="1"/>
</dbReference>
<dbReference type="Pfam" id="PF06325">
    <property type="entry name" value="PrmA"/>
    <property type="match status" value="1"/>
</dbReference>
<dbReference type="Pfam" id="PF22528">
    <property type="entry name" value="PRMT_C"/>
    <property type="match status" value="1"/>
</dbReference>
<dbReference type="SUPFAM" id="SSF53335">
    <property type="entry name" value="S-adenosyl-L-methionine-dependent methyltransferases"/>
    <property type="match status" value="2"/>
</dbReference>
<dbReference type="SUPFAM" id="SSF48452">
    <property type="entry name" value="TPR-like"/>
    <property type="match status" value="1"/>
</dbReference>
<dbReference type="PROSITE" id="PS51678">
    <property type="entry name" value="SAM_MT_PRMT"/>
    <property type="match status" value="2"/>
</dbReference>
<dbReference type="PROSITE" id="PS50005">
    <property type="entry name" value="TPR"/>
    <property type="match status" value="2"/>
</dbReference>
<dbReference type="PROSITE" id="PS50293">
    <property type="entry name" value="TPR_REGION"/>
    <property type="match status" value="1"/>
</dbReference>
<sequence length="846" mass="94220">MPNSRPRPRRGAGGGAGAAGRDRLVARSLQSAEHCLGDQDFGTAYAHYLLVLSLAPELKDDVKETFQYTLFKWAEELHALSRIQDLLGCYEQALELFPDDEVICNSMGEHLFRMGFRDEAAGYFHKAVKLNPDFNDAKENFYRVANWLVERWHFIMLNDTRRNMVYNAAIQKAVCLGSRTVLDIGTGTGILSMFAKKAGAQSVYACELSKTMYELACDVVAANKMENGIKLLHMKSLDIEIPKHIPERLSLVVTETVDAGVFGEGIVESLIHAWEHLLLQPKTKEENGNCGKYGKVIPAGAVIFGMAVECAEIRRHHRVGAKDIAGIHLPTNVKFQSPAYTSVDTEETVEPYTTEKMSGIPGGYLPLTECFQIMKVDFNNLQELKSLATKKPHSLNVPAIKEGVLDAIMVWFVLQLDDEYSLSTSPSEETCWEQAVYPVQALEDYCIQPGDRVTMEASCHDCYLRIQGISILHLEHEMEVMKGFTKSKDLLSLGNEAELCSALANLQTSRPEALEQTCMLEPTEIALLNNIPYHEGFKTAMRKVLSSLAPELLWQPMDTHCQYMEMNSGSGQSDAAPSTADPFYVLDVSEGFSLLPILAGTLGHVKPYSSVEKDQHCIALDLIAEANHFPKETLEFWLRHIEDEAAVLQRPKSDKLWSIIILDVIEPSGLIQQELMEKAAISRCLLQSGGKIFPQYVLMFGMLVESQTLVEESAVQGTEHTLGLNIAPFINQFQVPIRVCLDLSSLPCVPLSQPVELLRLDLMTPYLNTSNKEVKVRVCRSGRVTAVPFWFHLCLDDEVRLDTSGEASHWKQAAVVLDNPIQVQAGEELVLSVEHHKSNVSIAVKP</sequence>
<comment type="function">
    <text evidence="1">Arginine methyltransferase that can both catalyze the formation of omega-N monomethylarginine (MMA) and symmetrical dimethylarginine (sDMA). Specifically mediates the symmetrical dimethylation of SF3B2. Involved in the regulation of alternative splicing of pre-mRNA.</text>
</comment>
<comment type="catalytic activity">
    <reaction evidence="1">
        <text>L-arginyl-[protein] + 2 S-adenosyl-L-methionine = N(omega),N(omega)'-dimethyl-L-arginyl-[protein] + 2 S-adenosyl-L-homocysteine + 2 H(+)</text>
        <dbReference type="Rhea" id="RHEA:48108"/>
        <dbReference type="Rhea" id="RHEA-COMP:10532"/>
        <dbReference type="Rhea" id="RHEA-COMP:11992"/>
        <dbReference type="ChEBI" id="CHEBI:15378"/>
        <dbReference type="ChEBI" id="CHEBI:29965"/>
        <dbReference type="ChEBI" id="CHEBI:57856"/>
        <dbReference type="ChEBI" id="CHEBI:59789"/>
        <dbReference type="ChEBI" id="CHEBI:88221"/>
        <dbReference type="EC" id="2.1.1.320"/>
    </reaction>
</comment>
<comment type="subunit">
    <text evidence="1">Found in a complex with PRMT9, SF3B2 and SF3B4. Interacts with SF3B2.</text>
</comment>
<comment type="subcellular location">
    <subcellularLocation>
        <location evidence="1">Cytoplasm</location>
    </subcellularLocation>
</comment>
<comment type="alternative products">
    <event type="alternative splicing"/>
    <isoform>
        <id>Q3U3W5-1</id>
        <name>1</name>
        <sequence type="displayed"/>
    </isoform>
    <isoform>
        <id>Q3U3W5-2</id>
        <name>2</name>
        <sequence type="described" ref="VSP_032488 VSP_032489"/>
    </isoform>
</comment>
<comment type="similarity">
    <text evidence="2">Belongs to the class I-like SAM-binding methyltransferase superfamily. Protein arginine N-methyltransferase family.</text>
</comment>
<comment type="caution">
    <text evidence="4">This protein should not be confused with Fbxo11 (AC Q7TPD1) that was initially erroneously named Prmt9.</text>
</comment>
<comment type="sequence caution" evidence="4">
    <conflict type="frameshift">
        <sequence resource="EMBL-CDS" id="BAC32307"/>
    </conflict>
</comment>
<organism>
    <name type="scientific">Mus musculus</name>
    <name type="common">Mouse</name>
    <dbReference type="NCBI Taxonomy" id="10090"/>
    <lineage>
        <taxon>Eukaryota</taxon>
        <taxon>Metazoa</taxon>
        <taxon>Chordata</taxon>
        <taxon>Craniata</taxon>
        <taxon>Vertebrata</taxon>
        <taxon>Euteleostomi</taxon>
        <taxon>Mammalia</taxon>
        <taxon>Eutheria</taxon>
        <taxon>Euarchontoglires</taxon>
        <taxon>Glires</taxon>
        <taxon>Rodentia</taxon>
        <taxon>Myomorpha</taxon>
        <taxon>Muroidea</taxon>
        <taxon>Muridae</taxon>
        <taxon>Murinae</taxon>
        <taxon>Mus</taxon>
        <taxon>Mus</taxon>
    </lineage>
</organism>
<keyword id="KW-0025">Alternative splicing</keyword>
<keyword id="KW-0963">Cytoplasm</keyword>
<keyword id="KW-0489">Methyltransferase</keyword>
<keyword id="KW-1185">Reference proteome</keyword>
<keyword id="KW-0677">Repeat</keyword>
<keyword id="KW-0949">S-adenosyl-L-methionine</keyword>
<keyword id="KW-0802">TPR repeat</keyword>
<keyword id="KW-0808">Transferase</keyword>
<accession>Q3U3W5</accession>
<accession>D3YU52</accession>
<accession>Q8BLF8</accession>
<accession>Q8BLG1</accession>
<protein>
    <recommendedName>
        <fullName>Protein arginine N-methyltransferase 9</fullName>
    </recommendedName>
    <alternativeName>
        <fullName>Protein arginine N-methyltransferase 10</fullName>
        <ecNumber evidence="1">2.1.1.320</ecNumber>
    </alternativeName>
</protein>
<feature type="chain" id="PRO_0000325930" description="Protein arginine N-methyltransferase 9">
    <location>
        <begin position="1"/>
        <end position="846"/>
    </location>
</feature>
<feature type="repeat" description="TPR 1">
    <location>
        <begin position="25"/>
        <end position="58"/>
    </location>
</feature>
<feature type="repeat" description="TPR 2">
    <location>
        <begin position="67"/>
        <end position="100"/>
    </location>
</feature>
<feature type="repeat" description="TPR 3">
    <location>
        <begin position="101"/>
        <end position="134"/>
    </location>
</feature>
<feature type="domain" description="SAM-dependent MTase PRMT-type 1" evidence="2">
    <location>
        <begin position="137"/>
        <end position="466"/>
    </location>
</feature>
<feature type="domain" description="SAM-dependent MTase PRMT-type 2" evidence="2">
    <location>
        <begin position="530"/>
        <end position="846"/>
    </location>
</feature>
<feature type="splice variant" id="VSP_032488" description="In isoform 2." evidence="3">
    <original>LSLVVTETV</original>
    <variation>CVYKSLKTL</variation>
    <location>
        <begin position="249"/>
        <end position="257"/>
    </location>
</feature>
<feature type="splice variant" id="VSP_032489" description="In isoform 2." evidence="3">
    <location>
        <begin position="258"/>
        <end position="846"/>
    </location>
</feature>
<feature type="sequence conflict" description="In Ref. 1; BAC32300/BAE32670." evidence="4" ref="1">
    <original>L</original>
    <variation>V</variation>
    <location>
        <position position="249"/>
    </location>
</feature>
<feature type="sequence conflict" description="In Ref. 1; BAC32307." evidence="4" ref="1">
    <original>E</original>
    <variation>G</variation>
    <location>
        <position position="677"/>
    </location>
</feature>
<feature type="sequence conflict" description="In Ref. 1; BAE32670." evidence="4" ref="1">
    <original>Q</original>
    <variation>H</variation>
    <location>
        <position position="824"/>
    </location>
</feature>
<reference key="1">
    <citation type="journal article" date="2005" name="Science">
        <title>The transcriptional landscape of the mammalian genome.</title>
        <authorList>
            <person name="Carninci P."/>
            <person name="Kasukawa T."/>
            <person name="Katayama S."/>
            <person name="Gough J."/>
            <person name="Frith M.C."/>
            <person name="Maeda N."/>
            <person name="Oyama R."/>
            <person name="Ravasi T."/>
            <person name="Lenhard B."/>
            <person name="Wells C."/>
            <person name="Kodzius R."/>
            <person name="Shimokawa K."/>
            <person name="Bajic V.B."/>
            <person name="Brenner S.E."/>
            <person name="Batalov S."/>
            <person name="Forrest A.R."/>
            <person name="Zavolan M."/>
            <person name="Davis M.J."/>
            <person name="Wilming L.G."/>
            <person name="Aidinis V."/>
            <person name="Allen J.E."/>
            <person name="Ambesi-Impiombato A."/>
            <person name="Apweiler R."/>
            <person name="Aturaliya R.N."/>
            <person name="Bailey T.L."/>
            <person name="Bansal M."/>
            <person name="Baxter L."/>
            <person name="Beisel K.W."/>
            <person name="Bersano T."/>
            <person name="Bono H."/>
            <person name="Chalk A.M."/>
            <person name="Chiu K.P."/>
            <person name="Choudhary V."/>
            <person name="Christoffels A."/>
            <person name="Clutterbuck D.R."/>
            <person name="Crowe M.L."/>
            <person name="Dalla E."/>
            <person name="Dalrymple B.P."/>
            <person name="de Bono B."/>
            <person name="Della Gatta G."/>
            <person name="di Bernardo D."/>
            <person name="Down T."/>
            <person name="Engstrom P."/>
            <person name="Fagiolini M."/>
            <person name="Faulkner G."/>
            <person name="Fletcher C.F."/>
            <person name="Fukushima T."/>
            <person name="Furuno M."/>
            <person name="Futaki S."/>
            <person name="Gariboldi M."/>
            <person name="Georgii-Hemming P."/>
            <person name="Gingeras T.R."/>
            <person name="Gojobori T."/>
            <person name="Green R.E."/>
            <person name="Gustincich S."/>
            <person name="Harbers M."/>
            <person name="Hayashi Y."/>
            <person name="Hensch T.K."/>
            <person name="Hirokawa N."/>
            <person name="Hill D."/>
            <person name="Huminiecki L."/>
            <person name="Iacono M."/>
            <person name="Ikeo K."/>
            <person name="Iwama A."/>
            <person name="Ishikawa T."/>
            <person name="Jakt M."/>
            <person name="Kanapin A."/>
            <person name="Katoh M."/>
            <person name="Kawasawa Y."/>
            <person name="Kelso J."/>
            <person name="Kitamura H."/>
            <person name="Kitano H."/>
            <person name="Kollias G."/>
            <person name="Krishnan S.P."/>
            <person name="Kruger A."/>
            <person name="Kummerfeld S.K."/>
            <person name="Kurochkin I.V."/>
            <person name="Lareau L.F."/>
            <person name="Lazarevic D."/>
            <person name="Lipovich L."/>
            <person name="Liu J."/>
            <person name="Liuni S."/>
            <person name="McWilliam S."/>
            <person name="Madan Babu M."/>
            <person name="Madera M."/>
            <person name="Marchionni L."/>
            <person name="Matsuda H."/>
            <person name="Matsuzawa S."/>
            <person name="Miki H."/>
            <person name="Mignone F."/>
            <person name="Miyake S."/>
            <person name="Morris K."/>
            <person name="Mottagui-Tabar S."/>
            <person name="Mulder N."/>
            <person name="Nakano N."/>
            <person name="Nakauchi H."/>
            <person name="Ng P."/>
            <person name="Nilsson R."/>
            <person name="Nishiguchi S."/>
            <person name="Nishikawa S."/>
            <person name="Nori F."/>
            <person name="Ohara O."/>
            <person name="Okazaki Y."/>
            <person name="Orlando V."/>
            <person name="Pang K.C."/>
            <person name="Pavan W.J."/>
            <person name="Pavesi G."/>
            <person name="Pesole G."/>
            <person name="Petrovsky N."/>
            <person name="Piazza S."/>
            <person name="Reed J."/>
            <person name="Reid J.F."/>
            <person name="Ring B.Z."/>
            <person name="Ringwald M."/>
            <person name="Rost B."/>
            <person name="Ruan Y."/>
            <person name="Salzberg S.L."/>
            <person name="Sandelin A."/>
            <person name="Schneider C."/>
            <person name="Schoenbach C."/>
            <person name="Sekiguchi K."/>
            <person name="Semple C.A."/>
            <person name="Seno S."/>
            <person name="Sessa L."/>
            <person name="Sheng Y."/>
            <person name="Shibata Y."/>
            <person name="Shimada H."/>
            <person name="Shimada K."/>
            <person name="Silva D."/>
            <person name="Sinclair B."/>
            <person name="Sperling S."/>
            <person name="Stupka E."/>
            <person name="Sugiura K."/>
            <person name="Sultana R."/>
            <person name="Takenaka Y."/>
            <person name="Taki K."/>
            <person name="Tammoja K."/>
            <person name="Tan S.L."/>
            <person name="Tang S."/>
            <person name="Taylor M.S."/>
            <person name="Tegner J."/>
            <person name="Teichmann S.A."/>
            <person name="Ueda H.R."/>
            <person name="van Nimwegen E."/>
            <person name="Verardo R."/>
            <person name="Wei C.L."/>
            <person name="Yagi K."/>
            <person name="Yamanishi H."/>
            <person name="Zabarovsky E."/>
            <person name="Zhu S."/>
            <person name="Zimmer A."/>
            <person name="Hide W."/>
            <person name="Bult C."/>
            <person name="Grimmond S.M."/>
            <person name="Teasdale R.D."/>
            <person name="Liu E.T."/>
            <person name="Brusic V."/>
            <person name="Quackenbush J."/>
            <person name="Wahlestedt C."/>
            <person name="Mattick J.S."/>
            <person name="Hume D.A."/>
            <person name="Kai C."/>
            <person name="Sasaki D."/>
            <person name="Tomaru Y."/>
            <person name="Fukuda S."/>
            <person name="Kanamori-Katayama M."/>
            <person name="Suzuki M."/>
            <person name="Aoki J."/>
            <person name="Arakawa T."/>
            <person name="Iida J."/>
            <person name="Imamura K."/>
            <person name="Itoh M."/>
            <person name="Kato T."/>
            <person name="Kawaji H."/>
            <person name="Kawagashira N."/>
            <person name="Kawashima T."/>
            <person name="Kojima M."/>
            <person name="Kondo S."/>
            <person name="Konno H."/>
            <person name="Nakano K."/>
            <person name="Ninomiya N."/>
            <person name="Nishio T."/>
            <person name="Okada M."/>
            <person name="Plessy C."/>
            <person name="Shibata K."/>
            <person name="Shiraki T."/>
            <person name="Suzuki S."/>
            <person name="Tagami M."/>
            <person name="Waki K."/>
            <person name="Watahiki A."/>
            <person name="Okamura-Oho Y."/>
            <person name="Suzuki H."/>
            <person name="Kawai J."/>
            <person name="Hayashizaki Y."/>
        </authorList>
    </citation>
    <scope>NUCLEOTIDE SEQUENCE [LARGE SCALE MRNA] (ISOFORMS 1 AND 2)</scope>
    <source>
        <strain>C57BL/6J</strain>
        <strain>NOD</strain>
        <tissue>Embryo</tissue>
    </source>
</reference>
<reference key="2">
    <citation type="journal article" date="2009" name="PLoS Biol.">
        <title>Lineage-specific biology revealed by a finished genome assembly of the mouse.</title>
        <authorList>
            <person name="Church D.M."/>
            <person name="Goodstadt L."/>
            <person name="Hillier L.W."/>
            <person name="Zody M.C."/>
            <person name="Goldstein S."/>
            <person name="She X."/>
            <person name="Bult C.J."/>
            <person name="Agarwala R."/>
            <person name="Cherry J.L."/>
            <person name="DiCuccio M."/>
            <person name="Hlavina W."/>
            <person name="Kapustin Y."/>
            <person name="Meric P."/>
            <person name="Maglott D."/>
            <person name="Birtle Z."/>
            <person name="Marques A.C."/>
            <person name="Graves T."/>
            <person name="Zhou S."/>
            <person name="Teague B."/>
            <person name="Potamousis K."/>
            <person name="Churas C."/>
            <person name="Place M."/>
            <person name="Herschleb J."/>
            <person name="Runnheim R."/>
            <person name="Forrest D."/>
            <person name="Amos-Landgraf J."/>
            <person name="Schwartz D.C."/>
            <person name="Cheng Z."/>
            <person name="Lindblad-Toh K."/>
            <person name="Eichler E.E."/>
            <person name="Ponting C.P."/>
        </authorList>
    </citation>
    <scope>NUCLEOTIDE SEQUENCE [LARGE SCALE GENOMIC DNA]</scope>
    <source>
        <strain>C57BL/6J</strain>
    </source>
</reference>